<gene>
    <name evidence="1" type="primary">hemL1</name>
    <name type="ordered locus">NWMN_1561</name>
</gene>
<dbReference type="EC" id="5.4.3.8" evidence="1"/>
<dbReference type="EMBL" id="AP009351">
    <property type="protein sequence ID" value="BAF67833.1"/>
    <property type="molecule type" value="Genomic_DNA"/>
</dbReference>
<dbReference type="SMR" id="A6QHK1"/>
<dbReference type="KEGG" id="sae:NWMN_1561"/>
<dbReference type="HOGENOM" id="CLU_016922_1_5_9"/>
<dbReference type="UniPathway" id="UPA00251">
    <property type="reaction ID" value="UER00317"/>
</dbReference>
<dbReference type="Proteomes" id="UP000006386">
    <property type="component" value="Chromosome"/>
</dbReference>
<dbReference type="GO" id="GO:0005737">
    <property type="term" value="C:cytoplasm"/>
    <property type="evidence" value="ECO:0007669"/>
    <property type="project" value="UniProtKB-SubCell"/>
</dbReference>
<dbReference type="GO" id="GO:0042286">
    <property type="term" value="F:glutamate-1-semialdehyde 2,1-aminomutase activity"/>
    <property type="evidence" value="ECO:0007669"/>
    <property type="project" value="UniProtKB-UniRule"/>
</dbReference>
<dbReference type="GO" id="GO:0030170">
    <property type="term" value="F:pyridoxal phosphate binding"/>
    <property type="evidence" value="ECO:0007669"/>
    <property type="project" value="InterPro"/>
</dbReference>
<dbReference type="GO" id="GO:0008483">
    <property type="term" value="F:transaminase activity"/>
    <property type="evidence" value="ECO:0007669"/>
    <property type="project" value="InterPro"/>
</dbReference>
<dbReference type="GO" id="GO:0006782">
    <property type="term" value="P:protoporphyrinogen IX biosynthetic process"/>
    <property type="evidence" value="ECO:0007669"/>
    <property type="project" value="UniProtKB-UniRule"/>
</dbReference>
<dbReference type="CDD" id="cd00610">
    <property type="entry name" value="OAT_like"/>
    <property type="match status" value="1"/>
</dbReference>
<dbReference type="FunFam" id="3.40.640.10:FF:000021">
    <property type="entry name" value="Glutamate-1-semialdehyde 2,1-aminomutase"/>
    <property type="match status" value="1"/>
</dbReference>
<dbReference type="Gene3D" id="3.90.1150.10">
    <property type="entry name" value="Aspartate Aminotransferase, domain 1"/>
    <property type="match status" value="1"/>
</dbReference>
<dbReference type="Gene3D" id="3.40.640.10">
    <property type="entry name" value="Type I PLP-dependent aspartate aminotransferase-like (Major domain)"/>
    <property type="match status" value="1"/>
</dbReference>
<dbReference type="HAMAP" id="MF_00375">
    <property type="entry name" value="HemL_aminotrans_3"/>
    <property type="match status" value="1"/>
</dbReference>
<dbReference type="InterPro" id="IPR004639">
    <property type="entry name" value="4pyrrol_synth_GluAld_NH2Trfase"/>
</dbReference>
<dbReference type="InterPro" id="IPR005814">
    <property type="entry name" value="Aminotrans_3"/>
</dbReference>
<dbReference type="InterPro" id="IPR049704">
    <property type="entry name" value="Aminotrans_3_PPA_site"/>
</dbReference>
<dbReference type="InterPro" id="IPR015424">
    <property type="entry name" value="PyrdxlP-dep_Trfase"/>
</dbReference>
<dbReference type="InterPro" id="IPR015421">
    <property type="entry name" value="PyrdxlP-dep_Trfase_major"/>
</dbReference>
<dbReference type="InterPro" id="IPR015422">
    <property type="entry name" value="PyrdxlP-dep_Trfase_small"/>
</dbReference>
<dbReference type="NCBIfam" id="TIGR00713">
    <property type="entry name" value="hemL"/>
    <property type="match status" value="1"/>
</dbReference>
<dbReference type="NCBIfam" id="NF000818">
    <property type="entry name" value="PRK00062.1"/>
    <property type="match status" value="1"/>
</dbReference>
<dbReference type="PANTHER" id="PTHR43713">
    <property type="entry name" value="GLUTAMATE-1-SEMIALDEHYDE 2,1-AMINOMUTASE"/>
    <property type="match status" value="1"/>
</dbReference>
<dbReference type="PANTHER" id="PTHR43713:SF3">
    <property type="entry name" value="GLUTAMATE-1-SEMIALDEHYDE 2,1-AMINOMUTASE 1, CHLOROPLASTIC-RELATED"/>
    <property type="match status" value="1"/>
</dbReference>
<dbReference type="Pfam" id="PF00202">
    <property type="entry name" value="Aminotran_3"/>
    <property type="match status" value="1"/>
</dbReference>
<dbReference type="SUPFAM" id="SSF53383">
    <property type="entry name" value="PLP-dependent transferases"/>
    <property type="match status" value="1"/>
</dbReference>
<dbReference type="PROSITE" id="PS00600">
    <property type="entry name" value="AA_TRANSFER_CLASS_3"/>
    <property type="match status" value="1"/>
</dbReference>
<organism>
    <name type="scientific">Staphylococcus aureus (strain Newman)</name>
    <dbReference type="NCBI Taxonomy" id="426430"/>
    <lineage>
        <taxon>Bacteria</taxon>
        <taxon>Bacillati</taxon>
        <taxon>Bacillota</taxon>
        <taxon>Bacilli</taxon>
        <taxon>Bacillales</taxon>
        <taxon>Staphylococcaceae</taxon>
        <taxon>Staphylococcus</taxon>
    </lineage>
</organism>
<protein>
    <recommendedName>
        <fullName evidence="1">Glutamate-1-semialdehyde 2,1-aminomutase 1</fullName>
        <shortName evidence="1">GSA 1</shortName>
        <ecNumber evidence="1">5.4.3.8</ecNumber>
    </recommendedName>
    <alternativeName>
        <fullName evidence="1">Glutamate-1-semialdehyde aminotransferase 1</fullName>
        <shortName evidence="1">GSA-AT 1</shortName>
    </alternativeName>
</protein>
<name>GSA1_STAAE</name>
<accession>A6QHK1</accession>
<comment type="catalytic activity">
    <reaction evidence="1">
        <text>(S)-4-amino-5-oxopentanoate = 5-aminolevulinate</text>
        <dbReference type="Rhea" id="RHEA:14265"/>
        <dbReference type="ChEBI" id="CHEBI:57501"/>
        <dbReference type="ChEBI" id="CHEBI:356416"/>
        <dbReference type="EC" id="5.4.3.8"/>
    </reaction>
</comment>
<comment type="cofactor">
    <cofactor evidence="1">
        <name>pyridoxal 5'-phosphate</name>
        <dbReference type="ChEBI" id="CHEBI:597326"/>
    </cofactor>
</comment>
<comment type="pathway">
    <text evidence="1">Porphyrin-containing compound metabolism; protoporphyrin-IX biosynthesis; 5-aminolevulinate from L-glutamyl-tRNA(Glu): step 2/2.</text>
</comment>
<comment type="subunit">
    <text evidence="1">Homodimer.</text>
</comment>
<comment type="subcellular location">
    <subcellularLocation>
        <location evidence="1">Cytoplasm</location>
    </subcellularLocation>
</comment>
<comment type="similarity">
    <text evidence="1">Belongs to the class-III pyridoxal-phosphate-dependent aminotransferase family. HemL subfamily.</text>
</comment>
<sequence>MRYTKSEEAMKVAETLMPGGVNSPVRAFKSVDTPAIFMDHGKGSKIYDIDGNEYIDYVLSWGPLILGHRDPQVISHLHEAIDKGTSFGASTLLENKLAQLVIDRVPSIEKVRMVSSGTEATLDTLRLARGYTGRNKIVKFEGCYHGHSDSLLIKAGSGVATLGLPDSPGVPEGIAKNTITVPYNDLDALKIAFEKFGNDIAGVIVEPVAGNMGVVPPIEGFLQGLRDITTEYGALLIFDEVMTGFRVGYHCAQGYFGVTPDLTCLGKVIGGGLPVGAFGGKKEIMDHIAPLGNIYQAGTLSGNPLAMTSGYETLSQLTPETYEYFNMLGDILEDGLKRVFAKHNVPITVNRAGSMIGYFLNEGPVTNFEQANKSDLKLFAEMYREMAKEGVFLPPSQFEGTFLSTAHTKEDIEKTIQAFDTALSRIVK</sequence>
<evidence type="ECO:0000255" key="1">
    <source>
        <dbReference type="HAMAP-Rule" id="MF_00375"/>
    </source>
</evidence>
<reference key="1">
    <citation type="journal article" date="2008" name="J. Bacteriol.">
        <title>Genome sequence of Staphylococcus aureus strain Newman and comparative analysis of staphylococcal genomes: polymorphism and evolution of two major pathogenicity islands.</title>
        <authorList>
            <person name="Baba T."/>
            <person name="Bae T."/>
            <person name="Schneewind O."/>
            <person name="Takeuchi F."/>
            <person name="Hiramatsu K."/>
        </authorList>
    </citation>
    <scope>NUCLEOTIDE SEQUENCE [LARGE SCALE GENOMIC DNA]</scope>
    <source>
        <strain>Newman</strain>
    </source>
</reference>
<feature type="chain" id="PRO_0000382377" description="Glutamate-1-semialdehyde 2,1-aminomutase 1">
    <location>
        <begin position="1"/>
        <end position="428"/>
    </location>
</feature>
<feature type="modified residue" description="N6-(pyridoxal phosphate)lysine" evidence="1">
    <location>
        <position position="267"/>
    </location>
</feature>
<proteinExistence type="inferred from homology"/>
<keyword id="KW-0963">Cytoplasm</keyword>
<keyword id="KW-0413">Isomerase</keyword>
<keyword id="KW-0627">Porphyrin biosynthesis</keyword>
<keyword id="KW-0663">Pyridoxal phosphate</keyword>